<sequence>MSEITAAMVKELREKTGAGMMDCKKALAETGGDMEAAIDWLRAKGIAKADKKSGRTAAEGLIGVSSQGTKAVVVEVNSETDFVARNDAFQDLVRGIAKVAVSTNGSVDAVAAATYPASGKSVSDTIKDAIATIGENMNLRRSVALSVEDGVVATYIHNAVSDGLGKLGVLVALKSTGDKEALNAIGRQVAMHIAATAPLAIRPEEVDAAVAERERNVFIEQSRASGKPDNIIEKMVDGRMRKFFEEVALLSQAFVINPDLTVAAAVKEAEKAVGAPIEVAGMARLLLGEGVEKEETDFAAEVAAAVKG</sequence>
<gene>
    <name evidence="1" type="primary">tsf</name>
    <name type="ordered locus">Rleg2_1584</name>
</gene>
<evidence type="ECO:0000255" key="1">
    <source>
        <dbReference type="HAMAP-Rule" id="MF_00050"/>
    </source>
</evidence>
<accession>B5ZN84</accession>
<name>EFTS_RHILW</name>
<dbReference type="EMBL" id="CP001191">
    <property type="protein sequence ID" value="ACI54874.1"/>
    <property type="molecule type" value="Genomic_DNA"/>
</dbReference>
<dbReference type="RefSeq" id="WP_003573380.1">
    <property type="nucleotide sequence ID" value="NC_011369.1"/>
</dbReference>
<dbReference type="SMR" id="B5ZN84"/>
<dbReference type="STRING" id="395492.Rleg2_1584"/>
<dbReference type="KEGG" id="rlt:Rleg2_1584"/>
<dbReference type="eggNOG" id="COG0264">
    <property type="taxonomic scope" value="Bacteria"/>
</dbReference>
<dbReference type="HOGENOM" id="CLU_047155_2_0_5"/>
<dbReference type="Proteomes" id="UP000008330">
    <property type="component" value="Chromosome"/>
</dbReference>
<dbReference type="GO" id="GO:0005737">
    <property type="term" value="C:cytoplasm"/>
    <property type="evidence" value="ECO:0007669"/>
    <property type="project" value="UniProtKB-SubCell"/>
</dbReference>
<dbReference type="GO" id="GO:0003746">
    <property type="term" value="F:translation elongation factor activity"/>
    <property type="evidence" value="ECO:0007669"/>
    <property type="project" value="UniProtKB-UniRule"/>
</dbReference>
<dbReference type="CDD" id="cd14275">
    <property type="entry name" value="UBA_EF-Ts"/>
    <property type="match status" value="1"/>
</dbReference>
<dbReference type="FunFam" id="1.10.286.20:FF:000001">
    <property type="entry name" value="Elongation factor Ts"/>
    <property type="match status" value="1"/>
</dbReference>
<dbReference type="FunFam" id="1.10.8.10:FF:000001">
    <property type="entry name" value="Elongation factor Ts"/>
    <property type="match status" value="1"/>
</dbReference>
<dbReference type="Gene3D" id="1.10.286.20">
    <property type="match status" value="1"/>
</dbReference>
<dbReference type="Gene3D" id="1.10.8.10">
    <property type="entry name" value="DNA helicase RuvA subunit, C-terminal domain"/>
    <property type="match status" value="1"/>
</dbReference>
<dbReference type="Gene3D" id="3.30.479.20">
    <property type="entry name" value="Elongation factor Ts, dimerisation domain"/>
    <property type="match status" value="2"/>
</dbReference>
<dbReference type="HAMAP" id="MF_00050">
    <property type="entry name" value="EF_Ts"/>
    <property type="match status" value="1"/>
</dbReference>
<dbReference type="InterPro" id="IPR036402">
    <property type="entry name" value="EF-Ts_dimer_sf"/>
</dbReference>
<dbReference type="InterPro" id="IPR001816">
    <property type="entry name" value="Transl_elong_EFTs/EF1B"/>
</dbReference>
<dbReference type="InterPro" id="IPR014039">
    <property type="entry name" value="Transl_elong_EFTs/EF1B_dimer"/>
</dbReference>
<dbReference type="InterPro" id="IPR018101">
    <property type="entry name" value="Transl_elong_Ts_CS"/>
</dbReference>
<dbReference type="InterPro" id="IPR009060">
    <property type="entry name" value="UBA-like_sf"/>
</dbReference>
<dbReference type="NCBIfam" id="TIGR00116">
    <property type="entry name" value="tsf"/>
    <property type="match status" value="1"/>
</dbReference>
<dbReference type="PANTHER" id="PTHR11741">
    <property type="entry name" value="ELONGATION FACTOR TS"/>
    <property type="match status" value="1"/>
</dbReference>
<dbReference type="PANTHER" id="PTHR11741:SF0">
    <property type="entry name" value="ELONGATION FACTOR TS, MITOCHONDRIAL"/>
    <property type="match status" value="1"/>
</dbReference>
<dbReference type="Pfam" id="PF00889">
    <property type="entry name" value="EF_TS"/>
    <property type="match status" value="1"/>
</dbReference>
<dbReference type="SUPFAM" id="SSF54713">
    <property type="entry name" value="Elongation factor Ts (EF-Ts), dimerisation domain"/>
    <property type="match status" value="2"/>
</dbReference>
<dbReference type="SUPFAM" id="SSF46934">
    <property type="entry name" value="UBA-like"/>
    <property type="match status" value="1"/>
</dbReference>
<dbReference type="PROSITE" id="PS01126">
    <property type="entry name" value="EF_TS_1"/>
    <property type="match status" value="1"/>
</dbReference>
<dbReference type="PROSITE" id="PS01127">
    <property type="entry name" value="EF_TS_2"/>
    <property type="match status" value="1"/>
</dbReference>
<keyword id="KW-0963">Cytoplasm</keyword>
<keyword id="KW-0251">Elongation factor</keyword>
<keyword id="KW-0648">Protein biosynthesis</keyword>
<keyword id="KW-1185">Reference proteome</keyword>
<protein>
    <recommendedName>
        <fullName evidence="1">Elongation factor Ts</fullName>
        <shortName evidence="1">EF-Ts</shortName>
    </recommendedName>
</protein>
<comment type="function">
    <text evidence="1">Associates with the EF-Tu.GDP complex and induces the exchange of GDP to GTP. It remains bound to the aminoacyl-tRNA.EF-Tu.GTP complex up to the GTP hydrolysis stage on the ribosome.</text>
</comment>
<comment type="subcellular location">
    <subcellularLocation>
        <location evidence="1">Cytoplasm</location>
    </subcellularLocation>
</comment>
<comment type="similarity">
    <text evidence="1">Belongs to the EF-Ts family.</text>
</comment>
<organism>
    <name type="scientific">Rhizobium leguminosarum bv. trifolii (strain WSM2304)</name>
    <dbReference type="NCBI Taxonomy" id="395492"/>
    <lineage>
        <taxon>Bacteria</taxon>
        <taxon>Pseudomonadati</taxon>
        <taxon>Pseudomonadota</taxon>
        <taxon>Alphaproteobacteria</taxon>
        <taxon>Hyphomicrobiales</taxon>
        <taxon>Rhizobiaceae</taxon>
        <taxon>Rhizobium/Agrobacterium group</taxon>
        <taxon>Rhizobium</taxon>
    </lineage>
</organism>
<reference key="1">
    <citation type="journal article" date="2010" name="Stand. Genomic Sci.">
        <title>Complete genome sequence of Rhizobium leguminosarum bv trifolii strain WSM2304, an effective microsymbiont of the South American clover Trifolium polymorphum.</title>
        <authorList>
            <person name="Reeve W."/>
            <person name="O'Hara G."/>
            <person name="Chain P."/>
            <person name="Ardley J."/>
            <person name="Brau L."/>
            <person name="Nandesena K."/>
            <person name="Tiwari R."/>
            <person name="Malfatti S."/>
            <person name="Kiss H."/>
            <person name="Lapidus A."/>
            <person name="Copeland A."/>
            <person name="Nolan M."/>
            <person name="Land M."/>
            <person name="Ivanova N."/>
            <person name="Mavromatis K."/>
            <person name="Markowitz V."/>
            <person name="Kyrpides N."/>
            <person name="Melino V."/>
            <person name="Denton M."/>
            <person name="Yates R."/>
            <person name="Howieson J."/>
        </authorList>
    </citation>
    <scope>NUCLEOTIDE SEQUENCE [LARGE SCALE GENOMIC DNA]</scope>
    <source>
        <strain>WSM2304</strain>
    </source>
</reference>
<feature type="chain" id="PRO_1000116778" description="Elongation factor Ts">
    <location>
        <begin position="1"/>
        <end position="308"/>
    </location>
</feature>
<feature type="region of interest" description="Involved in Mg(2+) ion dislocation from EF-Tu" evidence="1">
    <location>
        <begin position="80"/>
        <end position="83"/>
    </location>
</feature>
<proteinExistence type="inferred from homology"/>